<keyword id="KW-0028">Amino-acid biosynthesis</keyword>
<keyword id="KW-0170">Cobalt</keyword>
<keyword id="KW-0220">Diaminopimelate biosynthesis</keyword>
<keyword id="KW-0378">Hydrolase</keyword>
<keyword id="KW-0457">Lysine biosynthesis</keyword>
<keyword id="KW-0479">Metal-binding</keyword>
<keyword id="KW-1185">Reference proteome</keyword>
<keyword id="KW-0862">Zinc</keyword>
<dbReference type="EC" id="3.5.1.18" evidence="1"/>
<dbReference type="EMBL" id="AE016826">
    <property type="protein sequence ID" value="AAO26824.1"/>
    <property type="molecule type" value="Genomic_DNA"/>
</dbReference>
<dbReference type="RefSeq" id="WP_011091225.1">
    <property type="nucleotide sequence ID" value="NC_004545.1"/>
</dbReference>
<dbReference type="SMR" id="Q89AY1"/>
<dbReference type="STRING" id="224915.bbp_089"/>
<dbReference type="KEGG" id="bab:bbp_089"/>
<dbReference type="eggNOG" id="COG0624">
    <property type="taxonomic scope" value="Bacteria"/>
</dbReference>
<dbReference type="HOGENOM" id="CLU_021802_4_0_6"/>
<dbReference type="OrthoDB" id="9809784at2"/>
<dbReference type="UniPathway" id="UPA00034">
    <property type="reaction ID" value="UER00021"/>
</dbReference>
<dbReference type="Proteomes" id="UP000000601">
    <property type="component" value="Chromosome"/>
</dbReference>
<dbReference type="GO" id="GO:0008777">
    <property type="term" value="F:acetylornithine deacetylase activity"/>
    <property type="evidence" value="ECO:0007669"/>
    <property type="project" value="TreeGrafter"/>
</dbReference>
<dbReference type="GO" id="GO:0050897">
    <property type="term" value="F:cobalt ion binding"/>
    <property type="evidence" value="ECO:0007669"/>
    <property type="project" value="UniProtKB-UniRule"/>
</dbReference>
<dbReference type="GO" id="GO:0009014">
    <property type="term" value="F:succinyl-diaminopimelate desuccinylase activity"/>
    <property type="evidence" value="ECO:0007669"/>
    <property type="project" value="UniProtKB-UniRule"/>
</dbReference>
<dbReference type="GO" id="GO:0008270">
    <property type="term" value="F:zinc ion binding"/>
    <property type="evidence" value="ECO:0007669"/>
    <property type="project" value="UniProtKB-UniRule"/>
</dbReference>
<dbReference type="GO" id="GO:0019877">
    <property type="term" value="P:diaminopimelate biosynthetic process"/>
    <property type="evidence" value="ECO:0007669"/>
    <property type="project" value="UniProtKB-UniRule"/>
</dbReference>
<dbReference type="GO" id="GO:0006526">
    <property type="term" value="P:L-arginine biosynthetic process"/>
    <property type="evidence" value="ECO:0007669"/>
    <property type="project" value="TreeGrafter"/>
</dbReference>
<dbReference type="GO" id="GO:0009089">
    <property type="term" value="P:lysine biosynthetic process via diaminopimelate"/>
    <property type="evidence" value="ECO:0007669"/>
    <property type="project" value="UniProtKB-UniRule"/>
</dbReference>
<dbReference type="CDD" id="cd03891">
    <property type="entry name" value="M20_DapE_proteobac"/>
    <property type="match status" value="1"/>
</dbReference>
<dbReference type="FunFam" id="3.40.630.10:FF:000005">
    <property type="entry name" value="Succinyl-diaminopimelate desuccinylase"/>
    <property type="match status" value="1"/>
</dbReference>
<dbReference type="Gene3D" id="3.40.630.10">
    <property type="entry name" value="Zn peptidases"/>
    <property type="match status" value="2"/>
</dbReference>
<dbReference type="HAMAP" id="MF_01690">
    <property type="entry name" value="DapE"/>
    <property type="match status" value="1"/>
</dbReference>
<dbReference type="InterPro" id="IPR001261">
    <property type="entry name" value="ArgE/DapE_CS"/>
</dbReference>
<dbReference type="InterPro" id="IPR036264">
    <property type="entry name" value="Bact_exopeptidase_dim_dom"/>
</dbReference>
<dbReference type="InterPro" id="IPR005941">
    <property type="entry name" value="DapE_proteobac"/>
</dbReference>
<dbReference type="InterPro" id="IPR002933">
    <property type="entry name" value="Peptidase_M20"/>
</dbReference>
<dbReference type="InterPro" id="IPR011650">
    <property type="entry name" value="Peptidase_M20_dimer"/>
</dbReference>
<dbReference type="InterPro" id="IPR050072">
    <property type="entry name" value="Peptidase_M20A"/>
</dbReference>
<dbReference type="NCBIfam" id="TIGR01246">
    <property type="entry name" value="dapE_proteo"/>
    <property type="match status" value="1"/>
</dbReference>
<dbReference type="NCBIfam" id="NF009557">
    <property type="entry name" value="PRK13009.1"/>
    <property type="match status" value="1"/>
</dbReference>
<dbReference type="PANTHER" id="PTHR43808">
    <property type="entry name" value="ACETYLORNITHINE DEACETYLASE"/>
    <property type="match status" value="1"/>
</dbReference>
<dbReference type="PANTHER" id="PTHR43808:SF31">
    <property type="entry name" value="N-ACETYL-L-CITRULLINE DEACETYLASE"/>
    <property type="match status" value="1"/>
</dbReference>
<dbReference type="Pfam" id="PF07687">
    <property type="entry name" value="M20_dimer"/>
    <property type="match status" value="1"/>
</dbReference>
<dbReference type="Pfam" id="PF01546">
    <property type="entry name" value="Peptidase_M20"/>
    <property type="match status" value="1"/>
</dbReference>
<dbReference type="SUPFAM" id="SSF55031">
    <property type="entry name" value="Bacterial exopeptidase dimerisation domain"/>
    <property type="match status" value="1"/>
</dbReference>
<dbReference type="SUPFAM" id="SSF53187">
    <property type="entry name" value="Zn-dependent exopeptidases"/>
    <property type="match status" value="1"/>
</dbReference>
<dbReference type="PROSITE" id="PS00758">
    <property type="entry name" value="ARGE_DAPE_CPG2_1"/>
    <property type="match status" value="1"/>
</dbReference>
<dbReference type="PROSITE" id="PS00759">
    <property type="entry name" value="ARGE_DAPE_CPG2_2"/>
    <property type="match status" value="1"/>
</dbReference>
<gene>
    <name evidence="1" type="primary">dapE</name>
    <name type="ordered locus">bbp_089</name>
</gene>
<feature type="chain" id="PRO_0000185259" description="Succinyl-diaminopimelate desuccinylase">
    <location>
        <begin position="1"/>
        <end position="377"/>
    </location>
</feature>
<feature type="active site" evidence="1">
    <location>
        <position position="69"/>
    </location>
</feature>
<feature type="active site" description="Proton acceptor" evidence="1">
    <location>
        <position position="134"/>
    </location>
</feature>
<feature type="binding site" evidence="1">
    <location>
        <position position="67"/>
    </location>
    <ligand>
        <name>Zn(2+)</name>
        <dbReference type="ChEBI" id="CHEBI:29105"/>
        <label>1</label>
    </ligand>
</feature>
<feature type="binding site" evidence="1">
    <location>
        <position position="100"/>
    </location>
    <ligand>
        <name>Zn(2+)</name>
        <dbReference type="ChEBI" id="CHEBI:29105"/>
        <label>1</label>
    </ligand>
</feature>
<feature type="binding site" evidence="1">
    <location>
        <position position="100"/>
    </location>
    <ligand>
        <name>Zn(2+)</name>
        <dbReference type="ChEBI" id="CHEBI:29105"/>
        <label>2</label>
    </ligand>
</feature>
<feature type="binding site" evidence="1">
    <location>
        <position position="135"/>
    </location>
    <ligand>
        <name>Zn(2+)</name>
        <dbReference type="ChEBI" id="CHEBI:29105"/>
        <label>2</label>
    </ligand>
</feature>
<feature type="binding site" evidence="1">
    <location>
        <position position="163"/>
    </location>
    <ligand>
        <name>Zn(2+)</name>
        <dbReference type="ChEBI" id="CHEBI:29105"/>
        <label>1</label>
    </ligand>
</feature>
<feature type="binding site" evidence="1">
    <location>
        <position position="349"/>
    </location>
    <ligand>
        <name>Zn(2+)</name>
        <dbReference type="ChEBI" id="CHEBI:29105"/>
        <label>2</label>
    </ligand>
</feature>
<reference key="1">
    <citation type="journal article" date="2003" name="Proc. Natl. Acad. Sci. U.S.A.">
        <title>Reductive genome evolution in Buchnera aphidicola.</title>
        <authorList>
            <person name="van Ham R.C.H.J."/>
            <person name="Kamerbeek J."/>
            <person name="Palacios C."/>
            <person name="Rausell C."/>
            <person name="Abascal F."/>
            <person name="Bastolla U."/>
            <person name="Fernandez J.M."/>
            <person name="Jimenez L."/>
            <person name="Postigo M."/>
            <person name="Silva F.J."/>
            <person name="Tamames J."/>
            <person name="Viguera E."/>
            <person name="Latorre A."/>
            <person name="Valencia A."/>
            <person name="Moran F."/>
            <person name="Moya A."/>
        </authorList>
    </citation>
    <scope>NUCLEOTIDE SEQUENCE [LARGE SCALE GENOMIC DNA]</scope>
    <source>
        <strain>Bp</strain>
    </source>
</reference>
<evidence type="ECO:0000255" key="1">
    <source>
        <dbReference type="HAMAP-Rule" id="MF_01690"/>
    </source>
</evidence>
<accession>Q89AY1</accession>
<protein>
    <recommendedName>
        <fullName evidence="1">Succinyl-diaminopimelate desuccinylase</fullName>
        <shortName evidence="1">SDAP desuccinylase</shortName>
        <ecNumber evidence="1">3.5.1.18</ecNumber>
    </recommendedName>
    <alternativeName>
        <fullName evidence="1">N-succinyl-LL-2,6-diaminoheptanedioate amidohydrolase</fullName>
    </alternativeName>
</protein>
<sequence>MSSCSVVNLAKQLISIPSISPMDLGCQKLISDRLINIGFSVENMNVNQTNNMWAYKGSGTTLAFSGHTDVVPIGNKILWNSPPFSPTVDKGVLFGRGSADMKGALAAMVIAVERFVKKQPDHHGRIAFLITSDEESMAHDGTIKIVSNLIKRKENIDYCIIGEPSSEQKLGDVIKNGRRGSITAYLCIYGVQGHIAYPNFSDNPIHKSISFFCTLISNCWDNGNVFFSPTSVQIYDIESKSSSDNMVPSELTVKFNFRFSNEITSSDIKKKVELLLKHFNLKYSIEWHVSGNPFLTKVGLLSDIVVRSVEELCHISPNLSTSGGTSDGRFIAELGSQIIELGLINKTIHKANECVEIKDLRLLCHLYECIITKIFEK</sequence>
<comment type="function">
    <text evidence="1">Catalyzes the hydrolysis of N-succinyl-L,L-diaminopimelic acid (SDAP), forming succinate and LL-2,6-diaminopimelate (DAP), an intermediate involved in the bacterial biosynthesis of lysine and meso-diaminopimelic acid, an essential component of bacterial cell walls.</text>
</comment>
<comment type="catalytic activity">
    <reaction evidence="1">
        <text>N-succinyl-(2S,6S)-2,6-diaminopimelate + H2O = (2S,6S)-2,6-diaminopimelate + succinate</text>
        <dbReference type="Rhea" id="RHEA:22608"/>
        <dbReference type="ChEBI" id="CHEBI:15377"/>
        <dbReference type="ChEBI" id="CHEBI:30031"/>
        <dbReference type="ChEBI" id="CHEBI:57609"/>
        <dbReference type="ChEBI" id="CHEBI:58087"/>
        <dbReference type="EC" id="3.5.1.18"/>
    </reaction>
</comment>
<comment type="cofactor">
    <cofactor evidence="1">
        <name>Zn(2+)</name>
        <dbReference type="ChEBI" id="CHEBI:29105"/>
    </cofactor>
    <cofactor evidence="1">
        <name>Co(2+)</name>
        <dbReference type="ChEBI" id="CHEBI:48828"/>
    </cofactor>
    <text evidence="1">Binds 2 Zn(2+) or Co(2+) ions per subunit.</text>
</comment>
<comment type="pathway">
    <text evidence="1">Amino-acid biosynthesis; L-lysine biosynthesis via DAP pathway; LL-2,6-diaminopimelate from (S)-tetrahydrodipicolinate (succinylase route): step 3/3.</text>
</comment>
<comment type="subunit">
    <text evidence="1">Homodimer.</text>
</comment>
<comment type="similarity">
    <text evidence="1">Belongs to the peptidase M20A family. DapE subfamily.</text>
</comment>
<proteinExistence type="inferred from homology"/>
<organism>
    <name type="scientific">Buchnera aphidicola subsp. Baizongia pistaciae (strain Bp)</name>
    <dbReference type="NCBI Taxonomy" id="224915"/>
    <lineage>
        <taxon>Bacteria</taxon>
        <taxon>Pseudomonadati</taxon>
        <taxon>Pseudomonadota</taxon>
        <taxon>Gammaproteobacteria</taxon>
        <taxon>Enterobacterales</taxon>
        <taxon>Erwiniaceae</taxon>
        <taxon>Buchnera</taxon>
    </lineage>
</organism>
<name>DAPE_BUCBP</name>